<sequence>MSYSYAEKKRIRKEFGVLPHILDVPYLLSIQTESYKKFLTVDAAKGRLHSGLEIVLKQSFPVESKNGQYELHYVDYQIGEPTFDETECQVRGATYDAPLNVKLRLVVYNKDALPNEKIVEDIREEYVYMGDIPLMTTNGTFIINGTERVVVSQLHRSPGVFFSKDDSEEGAFSARIIPYRGSWLDFEFDSKGIIWARIDRKRKFCATVILKALGYTQEQILENFSESKTITFNSKGFALRLDNLSNMKGELLKFDIVDAQDNVIVKKNKKLTSRDVKKIKDAGVDSVAIDFDLVSTLRVAKDIVNEATGEVIAYANDDVTESLLESCVEVGMLELEVIDFITTERGRYISDTLKYDLTRNTDEALVEIYKVLRPGDPPAAASVKALFEGLFFIESRYSLSDIGRMKLNARLGSDKVSKDIYTLENSDIVGVIEELINIRDGKGKVDDIDHLGNRRVRSVGEMVENQFRIGLYRVEKGIRESMSLVHKDKLMPKDIVNSKPITAAIKEFFTSGALSQFMDQDNPLSEVTHKRRISALGPGGLSRDRAGFEVRDVHATHYGRLCPIETPEGPNIGLINSLASYARVNDYGFLEAPYRKVVDGKVTDEIEYLSAIDEDNYVIAQASTKLDENNHFVEDIIQCRSGGEAIFTESSRVQYMDVSAKQMVSAAAALIPFLEHDDANRVLMGANMQRQAVPTLKSEKPLVGTGMEKIVARDSGNCIIARNVGEVAEVDSNRIVIKVDTEKSQTSNLVDIYSLTKFKRSNKNTCINQRPIVNVGDKVEAGDILADGFATDFGELSLGHNLMVAFMPWNGYNFEDSILLSERIVKDDKYTSIHIEEFTCVARDTKLGPEEITADIPNVSESSLAKLDESGIVHIGANVEAGDILVAKITPKAEQQLTPEERLLRAIFNEKASNVVDSSLRMPSGTSGTVINVQVFENDKGGKSKRALKIEKELIDKARKDFDEEFAVIESVVKSSIEQEVVGAKIQKAKGLKKGAILTKEFLATLPLSKWLEISFEDEKLEEKVQNAREYYEEAKIAIDAKFEAKKKSITQSNELSPGVLKTVKVFVAIKKRIQPGDKMAGRHGNKGVVSRVLPVEDMPYMEDGTPVDVCLNPLGIPSRMNIGQILEAHLGLASYGLGKKIEKTLEKTRKAAELRKTLEEVYNSVGDKKVNLEALNDEEILTLCDNLKGGVPIATPVFDGAKEEDIKSLLKIGGFATNGQMKLFDGRTGKPFDRHVTVGYMYMLKLDHLVDDKMHARSTGSYSLVTQQPLGGKAQFGGQRFGEMEVWALQAYGAAYTLREMLTVKSDDIAGRSKMYKNIVDGKLTMNVDVPESFNVLRNEVRALGIDMDFDYSSEEE</sequence>
<name>RPOB_FRATO</name>
<comment type="function">
    <text evidence="1">DNA-dependent RNA polymerase catalyzes the transcription of DNA into RNA using the four ribonucleoside triphosphates as substrates.</text>
</comment>
<comment type="catalytic activity">
    <reaction evidence="1">
        <text>RNA(n) + a ribonucleoside 5'-triphosphate = RNA(n+1) + diphosphate</text>
        <dbReference type="Rhea" id="RHEA:21248"/>
        <dbReference type="Rhea" id="RHEA-COMP:14527"/>
        <dbReference type="Rhea" id="RHEA-COMP:17342"/>
        <dbReference type="ChEBI" id="CHEBI:33019"/>
        <dbReference type="ChEBI" id="CHEBI:61557"/>
        <dbReference type="ChEBI" id="CHEBI:140395"/>
        <dbReference type="EC" id="2.7.7.6"/>
    </reaction>
</comment>
<comment type="subunit">
    <text evidence="1">The RNAP catalytic core consists of 2 alpha, 1 beta, 1 beta' and 1 omega subunit. When a sigma factor is associated with the core the holoenzyme is formed, which can initiate transcription.</text>
</comment>
<comment type="similarity">
    <text evidence="1">Belongs to the RNA polymerase beta chain family.</text>
</comment>
<dbReference type="EC" id="2.7.7.6" evidence="1"/>
<dbReference type="EMBL" id="CP000437">
    <property type="protein sequence ID" value="ABI83459.1"/>
    <property type="molecule type" value="Genomic_DNA"/>
</dbReference>
<dbReference type="RefSeq" id="WP_011648780.1">
    <property type="nucleotide sequence ID" value="NC_008369.1"/>
</dbReference>
<dbReference type="SMR" id="Q0BKC5"/>
<dbReference type="KEGG" id="fth:FTH_1683"/>
<dbReference type="GO" id="GO:0000428">
    <property type="term" value="C:DNA-directed RNA polymerase complex"/>
    <property type="evidence" value="ECO:0007669"/>
    <property type="project" value="UniProtKB-KW"/>
</dbReference>
<dbReference type="GO" id="GO:0003677">
    <property type="term" value="F:DNA binding"/>
    <property type="evidence" value="ECO:0007669"/>
    <property type="project" value="UniProtKB-UniRule"/>
</dbReference>
<dbReference type="GO" id="GO:0003899">
    <property type="term" value="F:DNA-directed RNA polymerase activity"/>
    <property type="evidence" value="ECO:0007669"/>
    <property type="project" value="UniProtKB-UniRule"/>
</dbReference>
<dbReference type="GO" id="GO:0032549">
    <property type="term" value="F:ribonucleoside binding"/>
    <property type="evidence" value="ECO:0007669"/>
    <property type="project" value="InterPro"/>
</dbReference>
<dbReference type="GO" id="GO:0006351">
    <property type="term" value="P:DNA-templated transcription"/>
    <property type="evidence" value="ECO:0007669"/>
    <property type="project" value="UniProtKB-UniRule"/>
</dbReference>
<dbReference type="CDD" id="cd00653">
    <property type="entry name" value="RNA_pol_B_RPB2"/>
    <property type="match status" value="1"/>
</dbReference>
<dbReference type="FunFam" id="3.90.1800.10:FF:000001">
    <property type="entry name" value="DNA-directed RNA polymerase subunit beta"/>
    <property type="match status" value="1"/>
</dbReference>
<dbReference type="Gene3D" id="2.40.50.100">
    <property type="match status" value="1"/>
</dbReference>
<dbReference type="Gene3D" id="2.40.50.150">
    <property type="match status" value="1"/>
</dbReference>
<dbReference type="Gene3D" id="3.90.1100.10">
    <property type="match status" value="2"/>
</dbReference>
<dbReference type="Gene3D" id="2.30.150.10">
    <property type="entry name" value="DNA-directed RNA polymerase, beta subunit, external 1 domain"/>
    <property type="match status" value="1"/>
</dbReference>
<dbReference type="Gene3D" id="2.40.270.10">
    <property type="entry name" value="DNA-directed RNA polymerase, subunit 2, domain 6"/>
    <property type="match status" value="2"/>
</dbReference>
<dbReference type="Gene3D" id="3.90.1800.10">
    <property type="entry name" value="RNA polymerase alpha subunit dimerisation domain"/>
    <property type="match status" value="1"/>
</dbReference>
<dbReference type="Gene3D" id="3.90.1110.10">
    <property type="entry name" value="RNA polymerase Rpb2, domain 2"/>
    <property type="match status" value="2"/>
</dbReference>
<dbReference type="HAMAP" id="MF_01321">
    <property type="entry name" value="RNApol_bact_RpoB"/>
    <property type="match status" value="1"/>
</dbReference>
<dbReference type="InterPro" id="IPR042107">
    <property type="entry name" value="DNA-dir_RNA_pol_bsu_ext_1_sf"/>
</dbReference>
<dbReference type="InterPro" id="IPR019462">
    <property type="entry name" value="DNA-dir_RNA_pol_bsu_external_1"/>
</dbReference>
<dbReference type="InterPro" id="IPR015712">
    <property type="entry name" value="DNA-dir_RNA_pol_su2"/>
</dbReference>
<dbReference type="InterPro" id="IPR007120">
    <property type="entry name" value="DNA-dir_RNAP_su2_dom"/>
</dbReference>
<dbReference type="InterPro" id="IPR037033">
    <property type="entry name" value="DNA-dir_RNAP_su2_hyb_sf"/>
</dbReference>
<dbReference type="InterPro" id="IPR010243">
    <property type="entry name" value="RNA_pol_bsu_bac"/>
</dbReference>
<dbReference type="InterPro" id="IPR007121">
    <property type="entry name" value="RNA_pol_bsu_CS"/>
</dbReference>
<dbReference type="InterPro" id="IPR007644">
    <property type="entry name" value="RNA_pol_bsu_protrusion"/>
</dbReference>
<dbReference type="InterPro" id="IPR007642">
    <property type="entry name" value="RNA_pol_Rpb2_2"/>
</dbReference>
<dbReference type="InterPro" id="IPR037034">
    <property type="entry name" value="RNA_pol_Rpb2_2_sf"/>
</dbReference>
<dbReference type="InterPro" id="IPR007645">
    <property type="entry name" value="RNA_pol_Rpb2_3"/>
</dbReference>
<dbReference type="InterPro" id="IPR007641">
    <property type="entry name" value="RNA_pol_Rpb2_7"/>
</dbReference>
<dbReference type="InterPro" id="IPR014724">
    <property type="entry name" value="RNA_pol_RPB2_OB-fold"/>
</dbReference>
<dbReference type="NCBIfam" id="NF001616">
    <property type="entry name" value="PRK00405.1"/>
    <property type="match status" value="1"/>
</dbReference>
<dbReference type="NCBIfam" id="TIGR02013">
    <property type="entry name" value="rpoB"/>
    <property type="match status" value="1"/>
</dbReference>
<dbReference type="PANTHER" id="PTHR20856">
    <property type="entry name" value="DNA-DIRECTED RNA POLYMERASE I SUBUNIT 2"/>
    <property type="match status" value="1"/>
</dbReference>
<dbReference type="Pfam" id="PF04563">
    <property type="entry name" value="RNA_pol_Rpb2_1"/>
    <property type="match status" value="1"/>
</dbReference>
<dbReference type="Pfam" id="PF04561">
    <property type="entry name" value="RNA_pol_Rpb2_2"/>
    <property type="match status" value="2"/>
</dbReference>
<dbReference type="Pfam" id="PF04565">
    <property type="entry name" value="RNA_pol_Rpb2_3"/>
    <property type="match status" value="1"/>
</dbReference>
<dbReference type="Pfam" id="PF10385">
    <property type="entry name" value="RNA_pol_Rpb2_45"/>
    <property type="match status" value="1"/>
</dbReference>
<dbReference type="Pfam" id="PF00562">
    <property type="entry name" value="RNA_pol_Rpb2_6"/>
    <property type="match status" value="1"/>
</dbReference>
<dbReference type="Pfam" id="PF04560">
    <property type="entry name" value="RNA_pol_Rpb2_7"/>
    <property type="match status" value="1"/>
</dbReference>
<dbReference type="SUPFAM" id="SSF64484">
    <property type="entry name" value="beta and beta-prime subunits of DNA dependent RNA-polymerase"/>
    <property type="match status" value="1"/>
</dbReference>
<dbReference type="PROSITE" id="PS01166">
    <property type="entry name" value="RNA_POL_BETA"/>
    <property type="match status" value="1"/>
</dbReference>
<organism>
    <name type="scientific">Francisella tularensis subsp. holarctica (strain OSU18)</name>
    <dbReference type="NCBI Taxonomy" id="393011"/>
    <lineage>
        <taxon>Bacteria</taxon>
        <taxon>Pseudomonadati</taxon>
        <taxon>Pseudomonadota</taxon>
        <taxon>Gammaproteobacteria</taxon>
        <taxon>Thiotrichales</taxon>
        <taxon>Francisellaceae</taxon>
        <taxon>Francisella</taxon>
    </lineage>
</organism>
<evidence type="ECO:0000255" key="1">
    <source>
        <dbReference type="HAMAP-Rule" id="MF_01321"/>
    </source>
</evidence>
<protein>
    <recommendedName>
        <fullName evidence="1">DNA-directed RNA polymerase subunit beta</fullName>
        <shortName evidence="1">RNAP subunit beta</shortName>
        <ecNumber evidence="1">2.7.7.6</ecNumber>
    </recommendedName>
    <alternativeName>
        <fullName evidence="1">RNA polymerase subunit beta</fullName>
    </alternativeName>
    <alternativeName>
        <fullName evidence="1">Transcriptase subunit beta</fullName>
    </alternativeName>
</protein>
<proteinExistence type="inferred from homology"/>
<gene>
    <name evidence="1" type="primary">rpoB</name>
    <name type="ordered locus">FTH_1683</name>
</gene>
<keyword id="KW-0240">DNA-directed RNA polymerase</keyword>
<keyword id="KW-0548">Nucleotidyltransferase</keyword>
<keyword id="KW-0804">Transcription</keyword>
<keyword id="KW-0808">Transferase</keyword>
<reference key="1">
    <citation type="journal article" date="2006" name="J. Bacteriol.">
        <title>Chromosome rearrangement and diversification of Francisella tularensis revealed by the type B (OSU18) genome sequence.</title>
        <authorList>
            <person name="Petrosino J.F."/>
            <person name="Xiang Q."/>
            <person name="Karpathy S.E."/>
            <person name="Jiang H."/>
            <person name="Yerrapragada S."/>
            <person name="Liu Y."/>
            <person name="Gioia J."/>
            <person name="Hemphill L."/>
            <person name="Gonzalez A."/>
            <person name="Raghavan T.M."/>
            <person name="Uzman A."/>
            <person name="Fox G.E."/>
            <person name="Highlander S."/>
            <person name="Reichard M."/>
            <person name="Morton R.J."/>
            <person name="Clinkenbeard K.D."/>
            <person name="Weinstock G.M."/>
        </authorList>
    </citation>
    <scope>NUCLEOTIDE SEQUENCE [LARGE SCALE GENOMIC DNA]</scope>
    <source>
        <strain>OSU18</strain>
    </source>
</reference>
<accession>Q0BKC5</accession>
<feature type="chain" id="PRO_0000300316" description="DNA-directed RNA polymerase subunit beta">
    <location>
        <begin position="1"/>
        <end position="1358"/>
    </location>
</feature>